<dbReference type="EMBL" id="CU207211">
    <property type="protein sequence ID" value="CAL62934.1"/>
    <property type="molecule type" value="Genomic_DNA"/>
</dbReference>
<dbReference type="SMR" id="A4G8U7"/>
<dbReference type="STRING" id="204773.HEAR2820"/>
<dbReference type="KEGG" id="har:HEAR2820"/>
<dbReference type="eggNOG" id="COG2001">
    <property type="taxonomic scope" value="Bacteria"/>
</dbReference>
<dbReference type="HOGENOM" id="CLU_107907_2_1_4"/>
<dbReference type="OrthoDB" id="9807753at2"/>
<dbReference type="Proteomes" id="UP000006697">
    <property type="component" value="Chromosome"/>
</dbReference>
<dbReference type="GO" id="GO:0005737">
    <property type="term" value="C:cytoplasm"/>
    <property type="evidence" value="ECO:0007669"/>
    <property type="project" value="UniProtKB-UniRule"/>
</dbReference>
<dbReference type="GO" id="GO:0009295">
    <property type="term" value="C:nucleoid"/>
    <property type="evidence" value="ECO:0007669"/>
    <property type="project" value="UniProtKB-SubCell"/>
</dbReference>
<dbReference type="GO" id="GO:0003700">
    <property type="term" value="F:DNA-binding transcription factor activity"/>
    <property type="evidence" value="ECO:0007669"/>
    <property type="project" value="UniProtKB-UniRule"/>
</dbReference>
<dbReference type="GO" id="GO:0000976">
    <property type="term" value="F:transcription cis-regulatory region binding"/>
    <property type="evidence" value="ECO:0007669"/>
    <property type="project" value="TreeGrafter"/>
</dbReference>
<dbReference type="GO" id="GO:2000143">
    <property type="term" value="P:negative regulation of DNA-templated transcription initiation"/>
    <property type="evidence" value="ECO:0007669"/>
    <property type="project" value="TreeGrafter"/>
</dbReference>
<dbReference type="CDD" id="cd16321">
    <property type="entry name" value="MraZ_C"/>
    <property type="match status" value="1"/>
</dbReference>
<dbReference type="CDD" id="cd16320">
    <property type="entry name" value="MraZ_N"/>
    <property type="match status" value="1"/>
</dbReference>
<dbReference type="Gene3D" id="3.40.1550.20">
    <property type="entry name" value="Transcriptional regulator MraZ domain"/>
    <property type="match status" value="1"/>
</dbReference>
<dbReference type="HAMAP" id="MF_01008">
    <property type="entry name" value="MraZ"/>
    <property type="match status" value="1"/>
</dbReference>
<dbReference type="InterPro" id="IPR003444">
    <property type="entry name" value="MraZ"/>
</dbReference>
<dbReference type="InterPro" id="IPR035644">
    <property type="entry name" value="MraZ_C"/>
</dbReference>
<dbReference type="InterPro" id="IPR020603">
    <property type="entry name" value="MraZ_dom"/>
</dbReference>
<dbReference type="InterPro" id="IPR035642">
    <property type="entry name" value="MraZ_N"/>
</dbReference>
<dbReference type="InterPro" id="IPR038619">
    <property type="entry name" value="MraZ_sf"/>
</dbReference>
<dbReference type="InterPro" id="IPR007159">
    <property type="entry name" value="SpoVT-AbrB_dom"/>
</dbReference>
<dbReference type="InterPro" id="IPR037914">
    <property type="entry name" value="SpoVT-AbrB_sf"/>
</dbReference>
<dbReference type="NCBIfam" id="TIGR00242">
    <property type="entry name" value="division/cell wall cluster transcriptional repressor MraZ"/>
    <property type="match status" value="1"/>
</dbReference>
<dbReference type="PANTHER" id="PTHR34701">
    <property type="entry name" value="TRANSCRIPTIONAL REGULATOR MRAZ"/>
    <property type="match status" value="1"/>
</dbReference>
<dbReference type="PANTHER" id="PTHR34701:SF1">
    <property type="entry name" value="TRANSCRIPTIONAL REGULATOR MRAZ"/>
    <property type="match status" value="1"/>
</dbReference>
<dbReference type="Pfam" id="PF02381">
    <property type="entry name" value="MraZ"/>
    <property type="match status" value="2"/>
</dbReference>
<dbReference type="SUPFAM" id="SSF89447">
    <property type="entry name" value="AbrB/MazE/MraZ-like"/>
    <property type="match status" value="1"/>
</dbReference>
<dbReference type="PROSITE" id="PS51740">
    <property type="entry name" value="SPOVT_ABRB"/>
    <property type="match status" value="2"/>
</dbReference>
<feature type="chain" id="PRO_1000062882" description="Transcriptional regulator MraZ">
    <location>
        <begin position="1"/>
        <end position="142"/>
    </location>
</feature>
<feature type="domain" description="SpoVT-AbrB 1" evidence="2">
    <location>
        <begin position="5"/>
        <end position="51"/>
    </location>
</feature>
<feature type="domain" description="SpoVT-AbrB 2" evidence="2">
    <location>
        <begin position="77"/>
        <end position="120"/>
    </location>
</feature>
<name>MRAZ_HERAR</name>
<comment type="subunit">
    <text evidence="1">Forms oligomers.</text>
</comment>
<comment type="subcellular location">
    <subcellularLocation>
        <location evidence="1">Cytoplasm</location>
        <location evidence="1">Nucleoid</location>
    </subcellularLocation>
</comment>
<comment type="similarity">
    <text evidence="1">Belongs to the MraZ family.</text>
</comment>
<organism>
    <name type="scientific">Herminiimonas arsenicoxydans</name>
    <dbReference type="NCBI Taxonomy" id="204773"/>
    <lineage>
        <taxon>Bacteria</taxon>
        <taxon>Pseudomonadati</taxon>
        <taxon>Pseudomonadota</taxon>
        <taxon>Betaproteobacteria</taxon>
        <taxon>Burkholderiales</taxon>
        <taxon>Oxalobacteraceae</taxon>
        <taxon>Herminiimonas</taxon>
    </lineage>
</organism>
<protein>
    <recommendedName>
        <fullName>Transcriptional regulator MraZ</fullName>
    </recommendedName>
</protein>
<sequence>MFQGASSLNLDAKGRMTIPARHRDALLLQCEGRITLTKHPDGCLLLFPRPVWEMRREEIAKWPISARAWQRIFLGNASDVDFDGAGRILIAPELRTAAGLTRDVMMMGMGGHFEIWDAARLAESESDAIAAGMPDVLNDFSF</sequence>
<keyword id="KW-0963">Cytoplasm</keyword>
<keyword id="KW-0238">DNA-binding</keyword>
<keyword id="KW-1185">Reference proteome</keyword>
<keyword id="KW-0677">Repeat</keyword>
<keyword id="KW-0804">Transcription</keyword>
<keyword id="KW-0805">Transcription regulation</keyword>
<evidence type="ECO:0000255" key="1">
    <source>
        <dbReference type="HAMAP-Rule" id="MF_01008"/>
    </source>
</evidence>
<evidence type="ECO:0000255" key="2">
    <source>
        <dbReference type="PROSITE-ProRule" id="PRU01076"/>
    </source>
</evidence>
<reference key="1">
    <citation type="journal article" date="2007" name="PLoS Genet.">
        <title>A tale of two oxidation states: bacterial colonization of arsenic-rich environments.</title>
        <authorList>
            <person name="Muller D."/>
            <person name="Medigue C."/>
            <person name="Koechler S."/>
            <person name="Barbe V."/>
            <person name="Barakat M."/>
            <person name="Talla E."/>
            <person name="Bonnefoy V."/>
            <person name="Krin E."/>
            <person name="Arsene-Ploetze F."/>
            <person name="Carapito C."/>
            <person name="Chandler M."/>
            <person name="Cournoyer B."/>
            <person name="Cruveiller S."/>
            <person name="Dossat C."/>
            <person name="Duval S."/>
            <person name="Heymann M."/>
            <person name="Leize E."/>
            <person name="Lieutaud A."/>
            <person name="Lievremont D."/>
            <person name="Makita Y."/>
            <person name="Mangenot S."/>
            <person name="Nitschke W."/>
            <person name="Ortet P."/>
            <person name="Perdrial N."/>
            <person name="Schoepp B."/>
            <person name="Siguier P."/>
            <person name="Simeonova D.D."/>
            <person name="Rouy Z."/>
            <person name="Segurens B."/>
            <person name="Turlin E."/>
            <person name="Vallenet D."/>
            <person name="van Dorsselaer A."/>
            <person name="Weiss S."/>
            <person name="Weissenbach J."/>
            <person name="Lett M.-C."/>
            <person name="Danchin A."/>
            <person name="Bertin P.N."/>
        </authorList>
    </citation>
    <scope>NUCLEOTIDE SEQUENCE [LARGE SCALE GENOMIC DNA]</scope>
    <source>
        <strain>ULPAs1</strain>
    </source>
</reference>
<gene>
    <name evidence="1" type="primary">mraZ</name>
    <name type="ordered locus">HEAR2820</name>
</gene>
<proteinExistence type="inferred from homology"/>
<accession>A4G8U7</accession>